<accession>Q8UDM8</accession>
<reference key="1">
    <citation type="journal article" date="2001" name="Science">
        <title>The genome of the natural genetic engineer Agrobacterium tumefaciens C58.</title>
        <authorList>
            <person name="Wood D.W."/>
            <person name="Setubal J.C."/>
            <person name="Kaul R."/>
            <person name="Monks D.E."/>
            <person name="Kitajima J.P."/>
            <person name="Okura V.K."/>
            <person name="Zhou Y."/>
            <person name="Chen L."/>
            <person name="Wood G.E."/>
            <person name="Almeida N.F. Jr."/>
            <person name="Woo L."/>
            <person name="Chen Y."/>
            <person name="Paulsen I.T."/>
            <person name="Eisen J.A."/>
            <person name="Karp P.D."/>
            <person name="Bovee D. Sr."/>
            <person name="Chapman P."/>
            <person name="Clendenning J."/>
            <person name="Deatherage G."/>
            <person name="Gillet W."/>
            <person name="Grant C."/>
            <person name="Kutyavin T."/>
            <person name="Levy R."/>
            <person name="Li M.-J."/>
            <person name="McClelland E."/>
            <person name="Palmieri A."/>
            <person name="Raymond C."/>
            <person name="Rouse G."/>
            <person name="Saenphimmachak C."/>
            <person name="Wu Z."/>
            <person name="Romero P."/>
            <person name="Gordon D."/>
            <person name="Zhang S."/>
            <person name="Yoo H."/>
            <person name="Tao Y."/>
            <person name="Biddle P."/>
            <person name="Jung M."/>
            <person name="Krespan W."/>
            <person name="Perry M."/>
            <person name="Gordon-Kamm B."/>
            <person name="Liao L."/>
            <person name="Kim S."/>
            <person name="Hendrick C."/>
            <person name="Zhao Z.-Y."/>
            <person name="Dolan M."/>
            <person name="Chumley F."/>
            <person name="Tingey S.V."/>
            <person name="Tomb J.-F."/>
            <person name="Gordon M.P."/>
            <person name="Olson M.V."/>
            <person name="Nester E.W."/>
        </authorList>
    </citation>
    <scope>NUCLEOTIDE SEQUENCE [LARGE SCALE GENOMIC DNA]</scope>
    <source>
        <strain>C58 / ATCC 33970</strain>
    </source>
</reference>
<reference key="2">
    <citation type="journal article" date="2001" name="Science">
        <title>Genome sequence of the plant pathogen and biotechnology agent Agrobacterium tumefaciens C58.</title>
        <authorList>
            <person name="Goodner B."/>
            <person name="Hinkle G."/>
            <person name="Gattung S."/>
            <person name="Miller N."/>
            <person name="Blanchard M."/>
            <person name="Qurollo B."/>
            <person name="Goldman B.S."/>
            <person name="Cao Y."/>
            <person name="Askenazi M."/>
            <person name="Halling C."/>
            <person name="Mullin L."/>
            <person name="Houmiel K."/>
            <person name="Gordon J."/>
            <person name="Vaudin M."/>
            <person name="Iartchouk O."/>
            <person name="Epp A."/>
            <person name="Liu F."/>
            <person name="Wollam C."/>
            <person name="Allinger M."/>
            <person name="Doughty D."/>
            <person name="Scott C."/>
            <person name="Lappas C."/>
            <person name="Markelz B."/>
            <person name="Flanagan C."/>
            <person name="Crowell C."/>
            <person name="Gurson J."/>
            <person name="Lomo C."/>
            <person name="Sear C."/>
            <person name="Strub G."/>
            <person name="Cielo C."/>
            <person name="Slater S."/>
        </authorList>
    </citation>
    <scope>NUCLEOTIDE SEQUENCE [LARGE SCALE GENOMIC DNA]</scope>
    <source>
        <strain>C58 / ATCC 33970</strain>
    </source>
</reference>
<name>MURG_AGRFC</name>
<protein>
    <recommendedName>
        <fullName evidence="1">UDP-N-acetylglucosamine--N-acetylmuramyl-(pentapeptide) pyrophosphoryl-undecaprenol N-acetylglucosamine transferase</fullName>
        <ecNumber evidence="1">2.4.1.227</ecNumber>
    </recommendedName>
    <alternativeName>
        <fullName evidence="1">Undecaprenyl-PP-MurNAc-pentapeptide-UDPGlcNAc GlcNAc transferase</fullName>
    </alternativeName>
</protein>
<evidence type="ECO:0000255" key="1">
    <source>
        <dbReference type="HAMAP-Rule" id="MF_00033"/>
    </source>
</evidence>
<organism>
    <name type="scientific">Agrobacterium fabrum (strain C58 / ATCC 33970)</name>
    <name type="common">Agrobacterium tumefaciens (strain C58)</name>
    <dbReference type="NCBI Taxonomy" id="176299"/>
    <lineage>
        <taxon>Bacteria</taxon>
        <taxon>Pseudomonadati</taxon>
        <taxon>Pseudomonadota</taxon>
        <taxon>Alphaproteobacteria</taxon>
        <taxon>Hyphomicrobiales</taxon>
        <taxon>Rhizobiaceae</taxon>
        <taxon>Rhizobium/Agrobacterium group</taxon>
        <taxon>Agrobacterium</taxon>
        <taxon>Agrobacterium tumefaciens complex</taxon>
    </lineage>
</organism>
<keyword id="KW-0131">Cell cycle</keyword>
<keyword id="KW-0132">Cell division</keyword>
<keyword id="KW-0997">Cell inner membrane</keyword>
<keyword id="KW-1003">Cell membrane</keyword>
<keyword id="KW-0133">Cell shape</keyword>
<keyword id="KW-0961">Cell wall biogenesis/degradation</keyword>
<keyword id="KW-0328">Glycosyltransferase</keyword>
<keyword id="KW-0472">Membrane</keyword>
<keyword id="KW-0573">Peptidoglycan synthesis</keyword>
<keyword id="KW-1185">Reference proteome</keyword>
<keyword id="KW-0808">Transferase</keyword>
<feature type="chain" id="PRO_0000109135" description="UDP-N-acetylglucosamine--N-acetylmuramyl-(pentapeptide) pyrophosphoryl-undecaprenol N-acetylglucosamine transferase">
    <location>
        <begin position="1"/>
        <end position="378"/>
    </location>
</feature>
<feature type="binding site" evidence="1">
    <location>
        <begin position="13"/>
        <end position="15"/>
    </location>
    <ligand>
        <name>UDP-N-acetyl-alpha-D-glucosamine</name>
        <dbReference type="ChEBI" id="CHEBI:57705"/>
    </ligand>
</feature>
<feature type="binding site" evidence="1">
    <location>
        <position position="124"/>
    </location>
    <ligand>
        <name>UDP-N-acetyl-alpha-D-glucosamine</name>
        <dbReference type="ChEBI" id="CHEBI:57705"/>
    </ligand>
</feature>
<feature type="binding site" evidence="1">
    <location>
        <position position="165"/>
    </location>
    <ligand>
        <name>UDP-N-acetyl-alpha-D-glucosamine</name>
        <dbReference type="ChEBI" id="CHEBI:57705"/>
    </ligand>
</feature>
<feature type="binding site" evidence="1">
    <location>
        <position position="193"/>
    </location>
    <ligand>
        <name>UDP-N-acetyl-alpha-D-glucosamine</name>
        <dbReference type="ChEBI" id="CHEBI:57705"/>
    </ligand>
</feature>
<feature type="binding site" evidence="1">
    <location>
        <position position="294"/>
    </location>
    <ligand>
        <name>UDP-N-acetyl-alpha-D-glucosamine</name>
        <dbReference type="ChEBI" id="CHEBI:57705"/>
    </ligand>
</feature>
<dbReference type="EC" id="2.4.1.227" evidence="1"/>
<dbReference type="EMBL" id="AE007869">
    <property type="protein sequence ID" value="AAK87844.1"/>
    <property type="molecule type" value="Genomic_DNA"/>
</dbReference>
<dbReference type="PIR" id="AG2833">
    <property type="entry name" value="AG2833"/>
</dbReference>
<dbReference type="PIR" id="C97611">
    <property type="entry name" value="C97611"/>
</dbReference>
<dbReference type="RefSeq" id="NP_355059.1">
    <property type="nucleotide sequence ID" value="NC_003062.2"/>
</dbReference>
<dbReference type="RefSeq" id="WP_010972053.1">
    <property type="nucleotide sequence ID" value="NC_003062.2"/>
</dbReference>
<dbReference type="SMR" id="Q8UDM8"/>
<dbReference type="STRING" id="176299.Atu2094"/>
<dbReference type="CAZy" id="GT28">
    <property type="family name" value="Glycosyltransferase Family 28"/>
</dbReference>
<dbReference type="EnsemblBacteria" id="AAK87844">
    <property type="protein sequence ID" value="AAK87844"/>
    <property type="gene ID" value="Atu2094"/>
</dbReference>
<dbReference type="GeneID" id="1134132"/>
<dbReference type="KEGG" id="atu:Atu2094"/>
<dbReference type="PATRIC" id="fig|176299.10.peg.2108"/>
<dbReference type="eggNOG" id="COG0707">
    <property type="taxonomic scope" value="Bacteria"/>
</dbReference>
<dbReference type="HOGENOM" id="CLU_037404_2_1_5"/>
<dbReference type="OrthoDB" id="9808936at2"/>
<dbReference type="PhylomeDB" id="Q8UDM8"/>
<dbReference type="BioCyc" id="AGRO:ATU2094-MONOMER"/>
<dbReference type="UniPathway" id="UPA00219"/>
<dbReference type="Proteomes" id="UP000000813">
    <property type="component" value="Chromosome circular"/>
</dbReference>
<dbReference type="GO" id="GO:0005886">
    <property type="term" value="C:plasma membrane"/>
    <property type="evidence" value="ECO:0007669"/>
    <property type="project" value="UniProtKB-SubCell"/>
</dbReference>
<dbReference type="GO" id="GO:0051991">
    <property type="term" value="F:UDP-N-acetyl-D-glucosamine:N-acetylmuramoyl-L-alanyl-D-glutamyl-meso-2,6-diaminopimelyl-D-alanyl-D-alanine-diphosphoundecaprenol 4-beta-N-acetylglucosaminlytransferase activity"/>
    <property type="evidence" value="ECO:0007669"/>
    <property type="project" value="RHEA"/>
</dbReference>
<dbReference type="GO" id="GO:0050511">
    <property type="term" value="F:undecaprenyldiphospho-muramoylpentapeptide beta-N-acetylglucosaminyltransferase activity"/>
    <property type="evidence" value="ECO:0007669"/>
    <property type="project" value="UniProtKB-UniRule"/>
</dbReference>
<dbReference type="GO" id="GO:0005975">
    <property type="term" value="P:carbohydrate metabolic process"/>
    <property type="evidence" value="ECO:0007669"/>
    <property type="project" value="InterPro"/>
</dbReference>
<dbReference type="GO" id="GO:0051301">
    <property type="term" value="P:cell division"/>
    <property type="evidence" value="ECO:0007669"/>
    <property type="project" value="UniProtKB-KW"/>
</dbReference>
<dbReference type="GO" id="GO:0071555">
    <property type="term" value="P:cell wall organization"/>
    <property type="evidence" value="ECO:0007669"/>
    <property type="project" value="UniProtKB-KW"/>
</dbReference>
<dbReference type="GO" id="GO:0030259">
    <property type="term" value="P:lipid glycosylation"/>
    <property type="evidence" value="ECO:0007669"/>
    <property type="project" value="UniProtKB-UniRule"/>
</dbReference>
<dbReference type="GO" id="GO:0009252">
    <property type="term" value="P:peptidoglycan biosynthetic process"/>
    <property type="evidence" value="ECO:0007669"/>
    <property type="project" value="UniProtKB-UniRule"/>
</dbReference>
<dbReference type="GO" id="GO:0008360">
    <property type="term" value="P:regulation of cell shape"/>
    <property type="evidence" value="ECO:0007669"/>
    <property type="project" value="UniProtKB-KW"/>
</dbReference>
<dbReference type="CDD" id="cd03785">
    <property type="entry name" value="GT28_MurG"/>
    <property type="match status" value="1"/>
</dbReference>
<dbReference type="Gene3D" id="3.40.50.2000">
    <property type="entry name" value="Glycogen Phosphorylase B"/>
    <property type="match status" value="2"/>
</dbReference>
<dbReference type="HAMAP" id="MF_00033">
    <property type="entry name" value="MurG"/>
    <property type="match status" value="1"/>
</dbReference>
<dbReference type="InterPro" id="IPR006009">
    <property type="entry name" value="GlcNAc_MurG"/>
</dbReference>
<dbReference type="InterPro" id="IPR007235">
    <property type="entry name" value="Glyco_trans_28_C"/>
</dbReference>
<dbReference type="InterPro" id="IPR004276">
    <property type="entry name" value="GlycoTrans_28_N"/>
</dbReference>
<dbReference type="NCBIfam" id="TIGR01133">
    <property type="entry name" value="murG"/>
    <property type="match status" value="1"/>
</dbReference>
<dbReference type="PANTHER" id="PTHR21015:SF22">
    <property type="entry name" value="GLYCOSYLTRANSFERASE"/>
    <property type="match status" value="1"/>
</dbReference>
<dbReference type="PANTHER" id="PTHR21015">
    <property type="entry name" value="UDP-N-ACETYLGLUCOSAMINE--N-ACETYLMURAMYL-(PENTAPEPTIDE) PYROPHOSPHORYL-UNDECAPRENOL N-ACETYLGLUCOSAMINE TRANSFERASE 1"/>
    <property type="match status" value="1"/>
</dbReference>
<dbReference type="Pfam" id="PF04101">
    <property type="entry name" value="Glyco_tran_28_C"/>
    <property type="match status" value="1"/>
</dbReference>
<dbReference type="Pfam" id="PF03033">
    <property type="entry name" value="Glyco_transf_28"/>
    <property type="match status" value="1"/>
</dbReference>
<dbReference type="SUPFAM" id="SSF53756">
    <property type="entry name" value="UDP-Glycosyltransferase/glycogen phosphorylase"/>
    <property type="match status" value="1"/>
</dbReference>
<comment type="function">
    <text evidence="1">Cell wall formation. Catalyzes the transfer of a GlcNAc subunit on undecaprenyl-pyrophosphoryl-MurNAc-pentapeptide (lipid intermediate I) to form undecaprenyl-pyrophosphoryl-MurNAc-(pentapeptide)GlcNAc (lipid intermediate II).</text>
</comment>
<comment type="catalytic activity">
    <reaction evidence="1">
        <text>di-trans,octa-cis-undecaprenyl diphospho-N-acetyl-alpha-D-muramoyl-L-alanyl-D-glutamyl-meso-2,6-diaminopimeloyl-D-alanyl-D-alanine + UDP-N-acetyl-alpha-D-glucosamine = di-trans,octa-cis-undecaprenyl diphospho-[N-acetyl-alpha-D-glucosaminyl-(1-&gt;4)]-N-acetyl-alpha-D-muramoyl-L-alanyl-D-glutamyl-meso-2,6-diaminopimeloyl-D-alanyl-D-alanine + UDP + H(+)</text>
        <dbReference type="Rhea" id="RHEA:31227"/>
        <dbReference type="ChEBI" id="CHEBI:15378"/>
        <dbReference type="ChEBI" id="CHEBI:57705"/>
        <dbReference type="ChEBI" id="CHEBI:58223"/>
        <dbReference type="ChEBI" id="CHEBI:61387"/>
        <dbReference type="ChEBI" id="CHEBI:61388"/>
        <dbReference type="EC" id="2.4.1.227"/>
    </reaction>
</comment>
<comment type="pathway">
    <text evidence="1">Cell wall biogenesis; peptidoglycan biosynthesis.</text>
</comment>
<comment type="subcellular location">
    <subcellularLocation>
        <location evidence="1">Cell inner membrane</location>
        <topology evidence="1">Peripheral membrane protein</topology>
        <orientation evidence="1">Cytoplasmic side</orientation>
    </subcellularLocation>
</comment>
<comment type="similarity">
    <text evidence="1">Belongs to the glycosyltransferase 28 family. MurG subfamily.</text>
</comment>
<proteinExistence type="inferred from homology"/>
<sequence length="378" mass="39216">MNKGIVLLAAGGTGGHVFPAEALAHTLKARGYQVHLVTDSRAERYAGKFPADEIHVVPSATIGSKNPISVVRSLWKLWVGLRTARRLVTKLKPVAVVGFGGYPTVPPLLASTGLGVPSIIHEQNAVMGRANKALAARVKAIAGGFLPPANGQYSEKTVATGNPVRPAVLAASEIPYTPSQTGETFQLVVFGGSQGAQFFSSAVPAAICLMKDEQRKRIVVTQQARPEDKDSVIASYQKLGVKADVSPFFGDMASRIGEADLVISRSGASTVSELSVIGRPSILVPYPHALDHDQAANAAALSAAGGASVIKQAELSPQKLSSLLSSALAEPDRLSATAAAAKATGKPHAADVLADLVEAIAEGRSVQEFKKKNEGVGA</sequence>
<gene>
    <name evidence="1" type="primary">murG</name>
    <name type="ordered locus">Atu2094</name>
    <name type="ORF">AGR_C_3798</name>
</gene>